<keyword id="KW-0067">ATP-binding</keyword>
<keyword id="KW-0963">Cytoplasm</keyword>
<keyword id="KW-0227">DNA damage</keyword>
<keyword id="KW-0233">DNA recombination</keyword>
<keyword id="KW-0234">DNA repair</keyword>
<keyword id="KW-0238">DNA-binding</keyword>
<keyword id="KW-0378">Hydrolase</keyword>
<keyword id="KW-0547">Nucleotide-binding</keyword>
<reference key="1">
    <citation type="journal article" date="2009" name="Appl. Environ. Microbiol.">
        <title>Novel features of the polysaccharide-digesting gliding bacterium Flavobacterium johnsoniae as revealed by genome sequence analysis.</title>
        <authorList>
            <person name="McBride M.J."/>
            <person name="Xie G."/>
            <person name="Martens E.C."/>
            <person name="Lapidus A."/>
            <person name="Henrissat B."/>
            <person name="Rhodes R.G."/>
            <person name="Goltsman E."/>
            <person name="Wang W."/>
            <person name="Xu J."/>
            <person name="Hunnicutt D.W."/>
            <person name="Staroscik A.M."/>
            <person name="Hoover T.R."/>
            <person name="Cheng Y.Q."/>
            <person name="Stein J.L."/>
        </authorList>
    </citation>
    <scope>NUCLEOTIDE SEQUENCE [LARGE SCALE GENOMIC DNA]</scope>
    <source>
        <strain>ATCC 17061 / DSM 2064 / JCM 8514 / BCRC 14874 / CCUG 350202 / NBRC 14942 / NCIMB 11054 / UW101</strain>
    </source>
</reference>
<name>RUVB_FLAJ1</name>
<gene>
    <name evidence="1" type="primary">ruvB</name>
    <name type="ordered locus">Fjoh_1642</name>
</gene>
<sequence>MNENLDPTTKGYNSEELDLEKRLRPLSFDDFAGQDQVLENLKVFVAAANQRGEALDHALFHGPPGLGKTTLANILANELEVGIKITSGPVLDKPGDLAGLLTNLDERDVLFIDEIHRLSPIVEEYLYSAMEDFKIDIMIESGPNARTVQINLNPFTLIGATTRSGLLTAPMRARFGISSRLQYYSTELLTTIVERSAGILKMPIDLEAAIEIAGRSRGTPRIANALLRRVRDFAQIKGNGTIDLEISKYALKALNVDAHGLDEMDNKILLTIINKFKGGPVGLSTLATAVSESSETIEEVYEPFLIQEGFIMRTPRGREVTEKAYKHLGKINTNIQGGLF</sequence>
<organism>
    <name type="scientific">Flavobacterium johnsoniae (strain ATCC 17061 / DSM 2064 / JCM 8514 / BCRC 14874 / CCUG 350202 / NBRC 14942 / NCIMB 11054 / UW101)</name>
    <name type="common">Cytophaga johnsonae</name>
    <dbReference type="NCBI Taxonomy" id="376686"/>
    <lineage>
        <taxon>Bacteria</taxon>
        <taxon>Pseudomonadati</taxon>
        <taxon>Bacteroidota</taxon>
        <taxon>Flavobacteriia</taxon>
        <taxon>Flavobacteriales</taxon>
        <taxon>Flavobacteriaceae</taxon>
        <taxon>Flavobacterium</taxon>
    </lineage>
</organism>
<comment type="function">
    <text evidence="1">The RuvA-RuvB-RuvC complex processes Holliday junction (HJ) DNA during genetic recombination and DNA repair, while the RuvA-RuvB complex plays an important role in the rescue of blocked DNA replication forks via replication fork reversal (RFR). RuvA specifically binds to HJ cruciform DNA, conferring on it an open structure. The RuvB hexamer acts as an ATP-dependent pump, pulling dsDNA into and through the RuvAB complex. RuvB forms 2 homohexamers on either side of HJ DNA bound by 1 or 2 RuvA tetramers; 4 subunits per hexamer contact DNA at a time. Coordinated motions by a converter formed by DNA-disengaged RuvB subunits stimulates ATP hydrolysis and nucleotide exchange. Immobilization of the converter enables RuvB to convert the ATP-contained energy into a lever motion, pulling 2 nucleotides of DNA out of the RuvA tetramer per ATP hydrolyzed, thus driving DNA branch migration. The RuvB motors rotate together with the DNA substrate, which together with the progressing nucleotide cycle form the mechanistic basis for DNA recombination by continuous HJ branch migration. Branch migration allows RuvC to scan DNA until it finds its consensus sequence, where it cleaves and resolves cruciform DNA.</text>
</comment>
<comment type="catalytic activity">
    <reaction evidence="1">
        <text>ATP + H2O = ADP + phosphate + H(+)</text>
        <dbReference type="Rhea" id="RHEA:13065"/>
        <dbReference type="ChEBI" id="CHEBI:15377"/>
        <dbReference type="ChEBI" id="CHEBI:15378"/>
        <dbReference type="ChEBI" id="CHEBI:30616"/>
        <dbReference type="ChEBI" id="CHEBI:43474"/>
        <dbReference type="ChEBI" id="CHEBI:456216"/>
    </reaction>
</comment>
<comment type="subunit">
    <text evidence="1">Homohexamer. Forms an RuvA(8)-RuvB(12)-Holliday junction (HJ) complex. HJ DNA is sandwiched between 2 RuvA tetramers; dsDNA enters through RuvA and exits via RuvB. An RuvB hexamer assembles on each DNA strand where it exits the tetramer. Each RuvB hexamer is contacted by two RuvA subunits (via domain III) on 2 adjacent RuvB subunits; this complex drives branch migration. In the full resolvosome a probable DNA-RuvA(4)-RuvB(12)-RuvC(2) complex forms which resolves the HJ.</text>
</comment>
<comment type="subcellular location">
    <subcellularLocation>
        <location evidence="1">Cytoplasm</location>
    </subcellularLocation>
</comment>
<comment type="domain">
    <text evidence="1">Has 3 domains, the large (RuvB-L) and small ATPase (RuvB-S) domains and the C-terminal head (RuvB-H) domain. The head domain binds DNA, while the ATPase domains jointly bind ATP, ADP or are empty depending on the state of the subunit in the translocation cycle. During a single DNA translocation step the structure of each domain remains the same, but their relative positions change.</text>
</comment>
<comment type="similarity">
    <text evidence="1">Belongs to the RuvB family.</text>
</comment>
<accession>A5FJE5</accession>
<dbReference type="EC" id="3.6.4.-" evidence="1"/>
<dbReference type="EMBL" id="CP000685">
    <property type="protein sequence ID" value="ABQ04674.1"/>
    <property type="molecule type" value="Genomic_DNA"/>
</dbReference>
<dbReference type="RefSeq" id="WP_012023718.1">
    <property type="nucleotide sequence ID" value="NZ_MUGZ01000017.1"/>
</dbReference>
<dbReference type="SMR" id="A5FJE5"/>
<dbReference type="STRING" id="376686.Fjoh_1642"/>
<dbReference type="KEGG" id="fjo:Fjoh_1642"/>
<dbReference type="eggNOG" id="COG2255">
    <property type="taxonomic scope" value="Bacteria"/>
</dbReference>
<dbReference type="HOGENOM" id="CLU_055599_1_0_10"/>
<dbReference type="OrthoDB" id="9804478at2"/>
<dbReference type="Proteomes" id="UP000006694">
    <property type="component" value="Chromosome"/>
</dbReference>
<dbReference type="GO" id="GO:0005737">
    <property type="term" value="C:cytoplasm"/>
    <property type="evidence" value="ECO:0007669"/>
    <property type="project" value="UniProtKB-SubCell"/>
</dbReference>
<dbReference type="GO" id="GO:0048476">
    <property type="term" value="C:Holliday junction resolvase complex"/>
    <property type="evidence" value="ECO:0007669"/>
    <property type="project" value="UniProtKB-UniRule"/>
</dbReference>
<dbReference type="GO" id="GO:0005524">
    <property type="term" value="F:ATP binding"/>
    <property type="evidence" value="ECO:0007669"/>
    <property type="project" value="UniProtKB-UniRule"/>
</dbReference>
<dbReference type="GO" id="GO:0016887">
    <property type="term" value="F:ATP hydrolysis activity"/>
    <property type="evidence" value="ECO:0007669"/>
    <property type="project" value="InterPro"/>
</dbReference>
<dbReference type="GO" id="GO:0000400">
    <property type="term" value="F:four-way junction DNA binding"/>
    <property type="evidence" value="ECO:0007669"/>
    <property type="project" value="UniProtKB-UniRule"/>
</dbReference>
<dbReference type="GO" id="GO:0009378">
    <property type="term" value="F:four-way junction helicase activity"/>
    <property type="evidence" value="ECO:0007669"/>
    <property type="project" value="InterPro"/>
</dbReference>
<dbReference type="GO" id="GO:0006310">
    <property type="term" value="P:DNA recombination"/>
    <property type="evidence" value="ECO:0007669"/>
    <property type="project" value="UniProtKB-UniRule"/>
</dbReference>
<dbReference type="GO" id="GO:0006281">
    <property type="term" value="P:DNA repair"/>
    <property type="evidence" value="ECO:0007669"/>
    <property type="project" value="UniProtKB-UniRule"/>
</dbReference>
<dbReference type="CDD" id="cd00009">
    <property type="entry name" value="AAA"/>
    <property type="match status" value="1"/>
</dbReference>
<dbReference type="Gene3D" id="1.10.8.60">
    <property type="match status" value="1"/>
</dbReference>
<dbReference type="Gene3D" id="3.40.50.300">
    <property type="entry name" value="P-loop containing nucleotide triphosphate hydrolases"/>
    <property type="match status" value="1"/>
</dbReference>
<dbReference type="Gene3D" id="1.10.10.10">
    <property type="entry name" value="Winged helix-like DNA-binding domain superfamily/Winged helix DNA-binding domain"/>
    <property type="match status" value="1"/>
</dbReference>
<dbReference type="HAMAP" id="MF_00016">
    <property type="entry name" value="DNA_HJ_migration_RuvB"/>
    <property type="match status" value="1"/>
</dbReference>
<dbReference type="InterPro" id="IPR003593">
    <property type="entry name" value="AAA+_ATPase"/>
</dbReference>
<dbReference type="InterPro" id="IPR041445">
    <property type="entry name" value="AAA_lid_4"/>
</dbReference>
<dbReference type="InterPro" id="IPR004605">
    <property type="entry name" value="DNA_helicase_Holl-junc_RuvB"/>
</dbReference>
<dbReference type="InterPro" id="IPR027417">
    <property type="entry name" value="P-loop_NTPase"/>
</dbReference>
<dbReference type="InterPro" id="IPR008824">
    <property type="entry name" value="RuvB-like_N"/>
</dbReference>
<dbReference type="InterPro" id="IPR008823">
    <property type="entry name" value="RuvB_C"/>
</dbReference>
<dbReference type="InterPro" id="IPR036388">
    <property type="entry name" value="WH-like_DNA-bd_sf"/>
</dbReference>
<dbReference type="InterPro" id="IPR036390">
    <property type="entry name" value="WH_DNA-bd_sf"/>
</dbReference>
<dbReference type="NCBIfam" id="NF000868">
    <property type="entry name" value="PRK00080.1"/>
    <property type="match status" value="1"/>
</dbReference>
<dbReference type="NCBIfam" id="TIGR00635">
    <property type="entry name" value="ruvB"/>
    <property type="match status" value="1"/>
</dbReference>
<dbReference type="PANTHER" id="PTHR42848">
    <property type="match status" value="1"/>
</dbReference>
<dbReference type="PANTHER" id="PTHR42848:SF1">
    <property type="entry name" value="HOLLIDAY JUNCTION BRANCH MIGRATION COMPLEX SUBUNIT RUVB"/>
    <property type="match status" value="1"/>
</dbReference>
<dbReference type="Pfam" id="PF17864">
    <property type="entry name" value="AAA_lid_4"/>
    <property type="match status" value="1"/>
</dbReference>
<dbReference type="Pfam" id="PF05491">
    <property type="entry name" value="RuvB_C"/>
    <property type="match status" value="1"/>
</dbReference>
<dbReference type="Pfam" id="PF05496">
    <property type="entry name" value="RuvB_N"/>
    <property type="match status" value="1"/>
</dbReference>
<dbReference type="SMART" id="SM00382">
    <property type="entry name" value="AAA"/>
    <property type="match status" value="1"/>
</dbReference>
<dbReference type="SUPFAM" id="SSF52540">
    <property type="entry name" value="P-loop containing nucleoside triphosphate hydrolases"/>
    <property type="match status" value="1"/>
</dbReference>
<dbReference type="SUPFAM" id="SSF46785">
    <property type="entry name" value="Winged helix' DNA-binding domain"/>
    <property type="match status" value="1"/>
</dbReference>
<proteinExistence type="inferred from homology"/>
<feature type="chain" id="PRO_1000074084" description="Holliday junction branch migration complex subunit RuvB">
    <location>
        <begin position="1"/>
        <end position="340"/>
    </location>
</feature>
<feature type="region of interest" description="Large ATPase domain (RuvB-L)" evidence="1">
    <location>
        <begin position="1"/>
        <end position="184"/>
    </location>
</feature>
<feature type="region of interest" description="Small ATPAse domain (RuvB-S)" evidence="1">
    <location>
        <begin position="185"/>
        <end position="255"/>
    </location>
</feature>
<feature type="region of interest" description="Head domain (RuvB-H)" evidence="1">
    <location>
        <begin position="258"/>
        <end position="340"/>
    </location>
</feature>
<feature type="binding site" evidence="1">
    <location>
        <position position="23"/>
    </location>
    <ligand>
        <name>ATP</name>
        <dbReference type="ChEBI" id="CHEBI:30616"/>
    </ligand>
</feature>
<feature type="binding site" evidence="1">
    <location>
        <position position="24"/>
    </location>
    <ligand>
        <name>ATP</name>
        <dbReference type="ChEBI" id="CHEBI:30616"/>
    </ligand>
</feature>
<feature type="binding site" evidence="1">
    <location>
        <position position="65"/>
    </location>
    <ligand>
        <name>ATP</name>
        <dbReference type="ChEBI" id="CHEBI:30616"/>
    </ligand>
</feature>
<feature type="binding site" evidence="1">
    <location>
        <position position="68"/>
    </location>
    <ligand>
        <name>ATP</name>
        <dbReference type="ChEBI" id="CHEBI:30616"/>
    </ligand>
</feature>
<feature type="binding site" evidence="1">
    <location>
        <position position="69"/>
    </location>
    <ligand>
        <name>ATP</name>
        <dbReference type="ChEBI" id="CHEBI:30616"/>
    </ligand>
</feature>
<feature type="binding site" evidence="1">
    <location>
        <position position="69"/>
    </location>
    <ligand>
        <name>Mg(2+)</name>
        <dbReference type="ChEBI" id="CHEBI:18420"/>
    </ligand>
</feature>
<feature type="binding site" evidence="1">
    <location>
        <position position="70"/>
    </location>
    <ligand>
        <name>ATP</name>
        <dbReference type="ChEBI" id="CHEBI:30616"/>
    </ligand>
</feature>
<feature type="binding site" evidence="1">
    <location>
        <begin position="131"/>
        <end position="133"/>
    </location>
    <ligand>
        <name>ATP</name>
        <dbReference type="ChEBI" id="CHEBI:30616"/>
    </ligand>
</feature>
<feature type="binding site" evidence="1">
    <location>
        <position position="174"/>
    </location>
    <ligand>
        <name>ATP</name>
        <dbReference type="ChEBI" id="CHEBI:30616"/>
    </ligand>
</feature>
<feature type="binding site" evidence="1">
    <location>
        <position position="184"/>
    </location>
    <ligand>
        <name>ATP</name>
        <dbReference type="ChEBI" id="CHEBI:30616"/>
    </ligand>
</feature>
<feature type="binding site" evidence="1">
    <location>
        <position position="221"/>
    </location>
    <ligand>
        <name>ATP</name>
        <dbReference type="ChEBI" id="CHEBI:30616"/>
    </ligand>
</feature>
<feature type="binding site" evidence="1">
    <location>
        <position position="313"/>
    </location>
    <ligand>
        <name>DNA</name>
        <dbReference type="ChEBI" id="CHEBI:16991"/>
    </ligand>
</feature>
<feature type="binding site" evidence="1">
    <location>
        <position position="318"/>
    </location>
    <ligand>
        <name>DNA</name>
        <dbReference type="ChEBI" id="CHEBI:16991"/>
    </ligand>
</feature>
<protein>
    <recommendedName>
        <fullName evidence="1">Holliday junction branch migration complex subunit RuvB</fullName>
        <ecNumber evidence="1">3.6.4.-</ecNumber>
    </recommendedName>
</protein>
<evidence type="ECO:0000255" key="1">
    <source>
        <dbReference type="HAMAP-Rule" id="MF_00016"/>
    </source>
</evidence>